<evidence type="ECO:0000255" key="1">
    <source>
        <dbReference type="HAMAP-Rule" id="MF_00060"/>
    </source>
</evidence>
<reference key="1">
    <citation type="journal article" date="2008" name="Genomics">
        <title>Characterization of ST-4821 complex, a unique Neisseria meningitidis clone.</title>
        <authorList>
            <person name="Peng J."/>
            <person name="Yang L."/>
            <person name="Yang F."/>
            <person name="Yang J."/>
            <person name="Yan Y."/>
            <person name="Nie H."/>
            <person name="Zhang X."/>
            <person name="Xiong Z."/>
            <person name="Jiang Y."/>
            <person name="Cheng F."/>
            <person name="Xu X."/>
            <person name="Chen S."/>
            <person name="Sun L."/>
            <person name="Li W."/>
            <person name="Shen Y."/>
            <person name="Shao Z."/>
            <person name="Liang X."/>
            <person name="Xu J."/>
            <person name="Jin Q."/>
        </authorList>
    </citation>
    <scope>NUCLEOTIDE SEQUENCE [LARGE SCALE GENOMIC DNA]</scope>
    <source>
        <strain>053442</strain>
    </source>
</reference>
<comment type="function">
    <text evidence="1">Nucleotidase that shows phosphatase activity on nucleoside 5'-monophosphates.</text>
</comment>
<comment type="catalytic activity">
    <reaction evidence="1">
        <text>a ribonucleoside 5'-phosphate + H2O = a ribonucleoside + phosphate</text>
        <dbReference type="Rhea" id="RHEA:12484"/>
        <dbReference type="ChEBI" id="CHEBI:15377"/>
        <dbReference type="ChEBI" id="CHEBI:18254"/>
        <dbReference type="ChEBI" id="CHEBI:43474"/>
        <dbReference type="ChEBI" id="CHEBI:58043"/>
        <dbReference type="EC" id="3.1.3.5"/>
    </reaction>
</comment>
<comment type="cofactor">
    <cofactor evidence="1">
        <name>a divalent metal cation</name>
        <dbReference type="ChEBI" id="CHEBI:60240"/>
    </cofactor>
    <text evidence="1">Binds 1 divalent metal cation per subunit.</text>
</comment>
<comment type="subcellular location">
    <subcellularLocation>
        <location evidence="1">Cytoplasm</location>
    </subcellularLocation>
</comment>
<comment type="similarity">
    <text evidence="1">Belongs to the SurE nucleotidase family.</text>
</comment>
<feature type="chain" id="PRO_1000075033" description="5'-nucleotidase SurE">
    <location>
        <begin position="1"/>
        <end position="248"/>
    </location>
</feature>
<feature type="binding site" evidence="1">
    <location>
        <position position="8"/>
    </location>
    <ligand>
        <name>a divalent metal cation</name>
        <dbReference type="ChEBI" id="CHEBI:60240"/>
    </ligand>
</feature>
<feature type="binding site" evidence="1">
    <location>
        <position position="9"/>
    </location>
    <ligand>
        <name>a divalent metal cation</name>
        <dbReference type="ChEBI" id="CHEBI:60240"/>
    </ligand>
</feature>
<feature type="binding site" evidence="1">
    <location>
        <position position="39"/>
    </location>
    <ligand>
        <name>a divalent metal cation</name>
        <dbReference type="ChEBI" id="CHEBI:60240"/>
    </ligand>
</feature>
<feature type="binding site" evidence="1">
    <location>
        <position position="91"/>
    </location>
    <ligand>
        <name>a divalent metal cation</name>
        <dbReference type="ChEBI" id="CHEBI:60240"/>
    </ligand>
</feature>
<gene>
    <name evidence="1" type="primary">surE</name>
    <name type="ordered locus">NMCC_1395</name>
</gene>
<organism>
    <name type="scientific">Neisseria meningitidis serogroup C (strain 053442)</name>
    <dbReference type="NCBI Taxonomy" id="374833"/>
    <lineage>
        <taxon>Bacteria</taxon>
        <taxon>Pseudomonadati</taxon>
        <taxon>Pseudomonadota</taxon>
        <taxon>Betaproteobacteria</taxon>
        <taxon>Neisseriales</taxon>
        <taxon>Neisseriaceae</taxon>
        <taxon>Neisseria</taxon>
    </lineage>
</organism>
<sequence length="248" mass="27021">MNVLISNDDGYLSEGIAVLARVTAEFANVRVVAPERDRSGVSNSLTLERPLQLKQAQNGFYYVNGTPTDCIHIGQSVFSDFQADFVFSGINRGANMGDDTLYSGTVAAATEAYLMGIPAVAFSLNDASGRYWATAEQALWTLLAHFFKTPPQSPILWNINIPAVAPEDVRGIKIARLGRRHHGQNVIPARNPRGEQIYWIGPVGEVSDREEGTDFGECGAGFITVTPLQIDLTAYPDMAETAAFWHAD</sequence>
<accession>A9M0S4</accession>
<protein>
    <recommendedName>
        <fullName evidence="1">5'-nucleotidase SurE</fullName>
        <ecNumber evidence="1">3.1.3.5</ecNumber>
    </recommendedName>
    <alternativeName>
        <fullName evidence="1">Nucleoside 5'-monophosphate phosphohydrolase</fullName>
    </alternativeName>
</protein>
<dbReference type="EC" id="3.1.3.5" evidence="1"/>
<dbReference type="EMBL" id="CP000381">
    <property type="protein sequence ID" value="ABX73564.1"/>
    <property type="molecule type" value="Genomic_DNA"/>
</dbReference>
<dbReference type="RefSeq" id="WP_012221833.1">
    <property type="nucleotide sequence ID" value="NC_010120.1"/>
</dbReference>
<dbReference type="SMR" id="A9M0S4"/>
<dbReference type="KEGG" id="nmn:NMCC_1395"/>
<dbReference type="HOGENOM" id="CLU_045192_1_2_4"/>
<dbReference type="Proteomes" id="UP000001177">
    <property type="component" value="Chromosome"/>
</dbReference>
<dbReference type="GO" id="GO:0005737">
    <property type="term" value="C:cytoplasm"/>
    <property type="evidence" value="ECO:0007669"/>
    <property type="project" value="UniProtKB-SubCell"/>
</dbReference>
<dbReference type="GO" id="GO:0008254">
    <property type="term" value="F:3'-nucleotidase activity"/>
    <property type="evidence" value="ECO:0007669"/>
    <property type="project" value="TreeGrafter"/>
</dbReference>
<dbReference type="GO" id="GO:0008253">
    <property type="term" value="F:5'-nucleotidase activity"/>
    <property type="evidence" value="ECO:0007669"/>
    <property type="project" value="UniProtKB-UniRule"/>
</dbReference>
<dbReference type="GO" id="GO:0004309">
    <property type="term" value="F:exopolyphosphatase activity"/>
    <property type="evidence" value="ECO:0007669"/>
    <property type="project" value="TreeGrafter"/>
</dbReference>
<dbReference type="GO" id="GO:0046872">
    <property type="term" value="F:metal ion binding"/>
    <property type="evidence" value="ECO:0007669"/>
    <property type="project" value="UniProtKB-UniRule"/>
</dbReference>
<dbReference type="GO" id="GO:0000166">
    <property type="term" value="F:nucleotide binding"/>
    <property type="evidence" value="ECO:0007669"/>
    <property type="project" value="UniProtKB-KW"/>
</dbReference>
<dbReference type="FunFam" id="3.40.1210.10:FF:000001">
    <property type="entry name" value="5'/3'-nucleotidase SurE"/>
    <property type="match status" value="1"/>
</dbReference>
<dbReference type="Gene3D" id="3.40.1210.10">
    <property type="entry name" value="Survival protein SurE-like phosphatase/nucleotidase"/>
    <property type="match status" value="1"/>
</dbReference>
<dbReference type="HAMAP" id="MF_00060">
    <property type="entry name" value="SurE"/>
    <property type="match status" value="1"/>
</dbReference>
<dbReference type="InterPro" id="IPR030048">
    <property type="entry name" value="SurE"/>
</dbReference>
<dbReference type="InterPro" id="IPR002828">
    <property type="entry name" value="SurE-like_Pase/nucleotidase"/>
</dbReference>
<dbReference type="InterPro" id="IPR036523">
    <property type="entry name" value="SurE-like_sf"/>
</dbReference>
<dbReference type="NCBIfam" id="NF001489">
    <property type="entry name" value="PRK00346.1-3"/>
    <property type="match status" value="1"/>
</dbReference>
<dbReference type="NCBIfam" id="NF001490">
    <property type="entry name" value="PRK00346.1-4"/>
    <property type="match status" value="1"/>
</dbReference>
<dbReference type="NCBIfam" id="TIGR00087">
    <property type="entry name" value="surE"/>
    <property type="match status" value="1"/>
</dbReference>
<dbReference type="PANTHER" id="PTHR30457">
    <property type="entry name" value="5'-NUCLEOTIDASE SURE"/>
    <property type="match status" value="1"/>
</dbReference>
<dbReference type="PANTHER" id="PTHR30457:SF12">
    <property type="entry name" value="5'_3'-NUCLEOTIDASE SURE"/>
    <property type="match status" value="1"/>
</dbReference>
<dbReference type="Pfam" id="PF01975">
    <property type="entry name" value="SurE"/>
    <property type="match status" value="1"/>
</dbReference>
<dbReference type="SUPFAM" id="SSF64167">
    <property type="entry name" value="SurE-like"/>
    <property type="match status" value="1"/>
</dbReference>
<keyword id="KW-0963">Cytoplasm</keyword>
<keyword id="KW-0378">Hydrolase</keyword>
<keyword id="KW-0479">Metal-binding</keyword>
<keyword id="KW-0547">Nucleotide-binding</keyword>
<proteinExistence type="inferred from homology"/>
<name>SURE_NEIM0</name>